<protein>
    <recommendedName>
        <fullName evidence="1">Ribosome-recycling factor</fullName>
        <shortName evidence="1">RRF</shortName>
    </recommendedName>
    <alternativeName>
        <fullName evidence="1">Ribosome-releasing factor</fullName>
    </alternativeName>
</protein>
<organism>
    <name type="scientific">Yersinia pestis</name>
    <dbReference type="NCBI Taxonomy" id="632"/>
    <lineage>
        <taxon>Bacteria</taxon>
        <taxon>Pseudomonadati</taxon>
        <taxon>Pseudomonadota</taxon>
        <taxon>Gammaproteobacteria</taxon>
        <taxon>Enterobacterales</taxon>
        <taxon>Yersiniaceae</taxon>
        <taxon>Yersinia</taxon>
    </lineage>
</organism>
<proteinExistence type="inferred from homology"/>
<keyword id="KW-0963">Cytoplasm</keyword>
<keyword id="KW-0648">Protein biosynthesis</keyword>
<keyword id="KW-1185">Reference proteome</keyword>
<gene>
    <name evidence="1" type="primary">frr</name>
    <name type="ordered locus">YPO1047</name>
    <name type="ordered locus">y3133</name>
    <name type="ordered locus">YP_2804</name>
</gene>
<feature type="chain" id="PRO_0000167587" description="Ribosome-recycling factor">
    <location>
        <begin position="1"/>
        <end position="185"/>
    </location>
</feature>
<dbReference type="EMBL" id="AL590842">
    <property type="protein sequence ID" value="CAL19712.1"/>
    <property type="molecule type" value="Genomic_DNA"/>
</dbReference>
<dbReference type="EMBL" id="AE009952">
    <property type="protein sequence ID" value="AAM86683.1"/>
    <property type="molecule type" value="Genomic_DNA"/>
</dbReference>
<dbReference type="EMBL" id="AE017042">
    <property type="protein sequence ID" value="AAS62988.1"/>
    <property type="molecule type" value="Genomic_DNA"/>
</dbReference>
<dbReference type="PIR" id="AF0128">
    <property type="entry name" value="AF0128"/>
</dbReference>
<dbReference type="RefSeq" id="WP_002212134.1">
    <property type="nucleotide sequence ID" value="NZ_WUCM01000044.1"/>
</dbReference>
<dbReference type="RefSeq" id="YP_002346090.1">
    <property type="nucleotide sequence ID" value="NC_003143.1"/>
</dbReference>
<dbReference type="SMR" id="Q8ZH63"/>
<dbReference type="STRING" id="214092.YPO1047"/>
<dbReference type="PaxDb" id="214092-YPO1047"/>
<dbReference type="DNASU" id="1148080"/>
<dbReference type="EnsemblBacteria" id="AAS62988">
    <property type="protein sequence ID" value="AAS62988"/>
    <property type="gene ID" value="YP_2804"/>
</dbReference>
<dbReference type="GeneID" id="57977514"/>
<dbReference type="KEGG" id="ype:YPO1047"/>
<dbReference type="KEGG" id="ypk:y3133"/>
<dbReference type="KEGG" id="ypm:YP_2804"/>
<dbReference type="PATRIC" id="fig|214092.21.peg.1335"/>
<dbReference type="eggNOG" id="COG0233">
    <property type="taxonomic scope" value="Bacteria"/>
</dbReference>
<dbReference type="HOGENOM" id="CLU_073981_2_1_6"/>
<dbReference type="OMA" id="FNPMNNG"/>
<dbReference type="OrthoDB" id="9804006at2"/>
<dbReference type="Proteomes" id="UP000000815">
    <property type="component" value="Chromosome"/>
</dbReference>
<dbReference type="Proteomes" id="UP000001019">
    <property type="component" value="Chromosome"/>
</dbReference>
<dbReference type="Proteomes" id="UP000002490">
    <property type="component" value="Chromosome"/>
</dbReference>
<dbReference type="GO" id="GO:0005737">
    <property type="term" value="C:cytoplasm"/>
    <property type="evidence" value="ECO:0000318"/>
    <property type="project" value="GO_Central"/>
</dbReference>
<dbReference type="GO" id="GO:0005829">
    <property type="term" value="C:cytosol"/>
    <property type="evidence" value="ECO:0007669"/>
    <property type="project" value="GOC"/>
</dbReference>
<dbReference type="GO" id="GO:0043023">
    <property type="term" value="F:ribosomal large subunit binding"/>
    <property type="evidence" value="ECO:0000318"/>
    <property type="project" value="GO_Central"/>
</dbReference>
<dbReference type="GO" id="GO:0002184">
    <property type="term" value="P:cytoplasmic translational termination"/>
    <property type="evidence" value="ECO:0000318"/>
    <property type="project" value="GO_Central"/>
</dbReference>
<dbReference type="GO" id="GO:0006412">
    <property type="term" value="P:translation"/>
    <property type="evidence" value="ECO:0000318"/>
    <property type="project" value="GO_Central"/>
</dbReference>
<dbReference type="CDD" id="cd00520">
    <property type="entry name" value="RRF"/>
    <property type="match status" value="1"/>
</dbReference>
<dbReference type="FunFam" id="1.10.132.20:FF:000001">
    <property type="entry name" value="Ribosome-recycling factor"/>
    <property type="match status" value="1"/>
</dbReference>
<dbReference type="FunFam" id="3.30.1360.40:FF:000001">
    <property type="entry name" value="Ribosome-recycling factor"/>
    <property type="match status" value="1"/>
</dbReference>
<dbReference type="Gene3D" id="3.30.1360.40">
    <property type="match status" value="1"/>
</dbReference>
<dbReference type="Gene3D" id="1.10.132.20">
    <property type="entry name" value="Ribosome-recycling factor"/>
    <property type="match status" value="1"/>
</dbReference>
<dbReference type="HAMAP" id="MF_00040">
    <property type="entry name" value="RRF"/>
    <property type="match status" value="1"/>
</dbReference>
<dbReference type="InterPro" id="IPR002661">
    <property type="entry name" value="Ribosome_recyc_fac"/>
</dbReference>
<dbReference type="InterPro" id="IPR023584">
    <property type="entry name" value="Ribosome_recyc_fac_dom"/>
</dbReference>
<dbReference type="InterPro" id="IPR036191">
    <property type="entry name" value="RRF_sf"/>
</dbReference>
<dbReference type="NCBIfam" id="TIGR00496">
    <property type="entry name" value="frr"/>
    <property type="match status" value="1"/>
</dbReference>
<dbReference type="PANTHER" id="PTHR20982:SF3">
    <property type="entry name" value="MITOCHONDRIAL RIBOSOME RECYCLING FACTOR PSEUDO 1"/>
    <property type="match status" value="1"/>
</dbReference>
<dbReference type="PANTHER" id="PTHR20982">
    <property type="entry name" value="RIBOSOME RECYCLING FACTOR"/>
    <property type="match status" value="1"/>
</dbReference>
<dbReference type="Pfam" id="PF01765">
    <property type="entry name" value="RRF"/>
    <property type="match status" value="1"/>
</dbReference>
<dbReference type="SUPFAM" id="SSF55194">
    <property type="entry name" value="Ribosome recycling factor, RRF"/>
    <property type="match status" value="1"/>
</dbReference>
<name>RRF_YERPE</name>
<reference key="1">
    <citation type="journal article" date="2001" name="Nature">
        <title>Genome sequence of Yersinia pestis, the causative agent of plague.</title>
        <authorList>
            <person name="Parkhill J."/>
            <person name="Wren B.W."/>
            <person name="Thomson N.R."/>
            <person name="Titball R.W."/>
            <person name="Holden M.T.G."/>
            <person name="Prentice M.B."/>
            <person name="Sebaihia M."/>
            <person name="James K.D."/>
            <person name="Churcher C.M."/>
            <person name="Mungall K.L."/>
            <person name="Baker S."/>
            <person name="Basham D."/>
            <person name="Bentley S.D."/>
            <person name="Brooks K."/>
            <person name="Cerdeno-Tarraga A.-M."/>
            <person name="Chillingworth T."/>
            <person name="Cronin A."/>
            <person name="Davies R.M."/>
            <person name="Davis P."/>
            <person name="Dougan G."/>
            <person name="Feltwell T."/>
            <person name="Hamlin N."/>
            <person name="Holroyd S."/>
            <person name="Jagels K."/>
            <person name="Karlyshev A.V."/>
            <person name="Leather S."/>
            <person name="Moule S."/>
            <person name="Oyston P.C.F."/>
            <person name="Quail M.A."/>
            <person name="Rutherford K.M."/>
            <person name="Simmonds M."/>
            <person name="Skelton J."/>
            <person name="Stevens K."/>
            <person name="Whitehead S."/>
            <person name="Barrell B.G."/>
        </authorList>
    </citation>
    <scope>NUCLEOTIDE SEQUENCE [LARGE SCALE GENOMIC DNA]</scope>
    <source>
        <strain>CO-92 / Biovar Orientalis</strain>
    </source>
</reference>
<reference key="2">
    <citation type="journal article" date="2002" name="J. Bacteriol.">
        <title>Genome sequence of Yersinia pestis KIM.</title>
        <authorList>
            <person name="Deng W."/>
            <person name="Burland V."/>
            <person name="Plunkett G. III"/>
            <person name="Boutin A."/>
            <person name="Mayhew G.F."/>
            <person name="Liss P."/>
            <person name="Perna N.T."/>
            <person name="Rose D.J."/>
            <person name="Mau B."/>
            <person name="Zhou S."/>
            <person name="Schwartz D.C."/>
            <person name="Fetherston J.D."/>
            <person name="Lindler L.E."/>
            <person name="Brubaker R.R."/>
            <person name="Plano G.V."/>
            <person name="Straley S.C."/>
            <person name="McDonough K.A."/>
            <person name="Nilles M.L."/>
            <person name="Matson J.S."/>
            <person name="Blattner F.R."/>
            <person name="Perry R.D."/>
        </authorList>
    </citation>
    <scope>NUCLEOTIDE SEQUENCE [LARGE SCALE GENOMIC DNA]</scope>
    <source>
        <strain>KIM10+ / Biovar Mediaevalis</strain>
    </source>
</reference>
<reference key="3">
    <citation type="journal article" date="2004" name="DNA Res.">
        <title>Complete genome sequence of Yersinia pestis strain 91001, an isolate avirulent to humans.</title>
        <authorList>
            <person name="Song Y."/>
            <person name="Tong Z."/>
            <person name="Wang J."/>
            <person name="Wang L."/>
            <person name="Guo Z."/>
            <person name="Han Y."/>
            <person name="Zhang J."/>
            <person name="Pei D."/>
            <person name="Zhou D."/>
            <person name="Qin H."/>
            <person name="Pang X."/>
            <person name="Han Y."/>
            <person name="Zhai J."/>
            <person name="Li M."/>
            <person name="Cui B."/>
            <person name="Qi Z."/>
            <person name="Jin L."/>
            <person name="Dai R."/>
            <person name="Chen F."/>
            <person name="Li S."/>
            <person name="Ye C."/>
            <person name="Du Z."/>
            <person name="Lin W."/>
            <person name="Wang J."/>
            <person name="Yu J."/>
            <person name="Yang H."/>
            <person name="Wang J."/>
            <person name="Huang P."/>
            <person name="Yang R."/>
        </authorList>
    </citation>
    <scope>NUCLEOTIDE SEQUENCE [LARGE SCALE GENOMIC DNA]</scope>
    <source>
        <strain>91001 / Biovar Mediaevalis</strain>
    </source>
</reference>
<accession>Q8ZH63</accession>
<accession>Q0WHZ8</accession>
<sequence length="185" mass="20710">MINEIRKDAEVRMEKCLEAFQNHISKIRTGRASPSILDGIQVEYYGTATPLRQLANIVVEDSRTLALTVFDRSLSAAVEKAIMTSDLGLNPSSAGTVIRVPLPALTEERRKDLIKVVRAEAEQGRVSIRNVRRDANDKVKALLKDKEISEDEDRRSQDDVQKLTDAYIKKVDAALAVKEAELMDF</sequence>
<evidence type="ECO:0000255" key="1">
    <source>
        <dbReference type="HAMAP-Rule" id="MF_00040"/>
    </source>
</evidence>
<comment type="function">
    <text evidence="1">Responsible for the release of ribosomes from messenger RNA at the termination of protein biosynthesis. May increase the efficiency of translation by recycling ribosomes from one round of translation to another.</text>
</comment>
<comment type="subcellular location">
    <subcellularLocation>
        <location evidence="1">Cytoplasm</location>
    </subcellularLocation>
</comment>
<comment type="similarity">
    <text evidence="1">Belongs to the RRF family.</text>
</comment>